<protein>
    <recommendedName>
        <fullName evidence="1">Phosphate import ATP-binding protein PstB</fullName>
        <ecNumber evidence="1">7.3.2.1</ecNumber>
    </recommendedName>
    <alternativeName>
        <fullName evidence="1">ABC phosphate transporter</fullName>
    </alternativeName>
    <alternativeName>
        <fullName evidence="1">Phosphate-transporting ATPase</fullName>
    </alternativeName>
</protein>
<dbReference type="EC" id="7.3.2.1" evidence="1"/>
<dbReference type="EMBL" id="AE015929">
    <property type="protein sequence ID" value="AAO04664.1"/>
    <property type="molecule type" value="Genomic_DNA"/>
</dbReference>
<dbReference type="RefSeq" id="NP_764622.1">
    <property type="nucleotide sequence ID" value="NC_004461.1"/>
</dbReference>
<dbReference type="RefSeq" id="WP_001831097.1">
    <property type="nucleotide sequence ID" value="NZ_WBME01000002.1"/>
</dbReference>
<dbReference type="SMR" id="Q8CPA1"/>
<dbReference type="GeneID" id="50018807"/>
<dbReference type="KEGG" id="sep:SE_1067"/>
<dbReference type="PATRIC" id="fig|176280.10.peg.1043"/>
<dbReference type="eggNOG" id="COG1117">
    <property type="taxonomic scope" value="Bacteria"/>
</dbReference>
<dbReference type="HOGENOM" id="CLU_000604_1_22_9"/>
<dbReference type="OrthoDB" id="9802185at2"/>
<dbReference type="Proteomes" id="UP000001411">
    <property type="component" value="Chromosome"/>
</dbReference>
<dbReference type="GO" id="GO:0005886">
    <property type="term" value="C:plasma membrane"/>
    <property type="evidence" value="ECO:0007669"/>
    <property type="project" value="UniProtKB-SubCell"/>
</dbReference>
<dbReference type="GO" id="GO:0005524">
    <property type="term" value="F:ATP binding"/>
    <property type="evidence" value="ECO:0007669"/>
    <property type="project" value="UniProtKB-KW"/>
</dbReference>
<dbReference type="GO" id="GO:0016887">
    <property type="term" value="F:ATP hydrolysis activity"/>
    <property type="evidence" value="ECO:0007669"/>
    <property type="project" value="InterPro"/>
</dbReference>
<dbReference type="GO" id="GO:0015415">
    <property type="term" value="F:ATPase-coupled phosphate ion transmembrane transporter activity"/>
    <property type="evidence" value="ECO:0007669"/>
    <property type="project" value="UniProtKB-EC"/>
</dbReference>
<dbReference type="GO" id="GO:0035435">
    <property type="term" value="P:phosphate ion transmembrane transport"/>
    <property type="evidence" value="ECO:0007669"/>
    <property type="project" value="InterPro"/>
</dbReference>
<dbReference type="CDD" id="cd03260">
    <property type="entry name" value="ABC_PstB_phosphate_transporter"/>
    <property type="match status" value="1"/>
</dbReference>
<dbReference type="Gene3D" id="3.40.50.300">
    <property type="entry name" value="P-loop containing nucleotide triphosphate hydrolases"/>
    <property type="match status" value="1"/>
</dbReference>
<dbReference type="InterPro" id="IPR003593">
    <property type="entry name" value="AAA+_ATPase"/>
</dbReference>
<dbReference type="InterPro" id="IPR003439">
    <property type="entry name" value="ABC_transporter-like_ATP-bd"/>
</dbReference>
<dbReference type="InterPro" id="IPR017871">
    <property type="entry name" value="ABC_transporter-like_CS"/>
</dbReference>
<dbReference type="InterPro" id="IPR027417">
    <property type="entry name" value="P-loop_NTPase"/>
</dbReference>
<dbReference type="InterPro" id="IPR005670">
    <property type="entry name" value="PstB-like"/>
</dbReference>
<dbReference type="NCBIfam" id="TIGR00972">
    <property type="entry name" value="3a0107s01c2"/>
    <property type="match status" value="1"/>
</dbReference>
<dbReference type="PANTHER" id="PTHR43423">
    <property type="entry name" value="ABC TRANSPORTER I FAMILY MEMBER 17"/>
    <property type="match status" value="1"/>
</dbReference>
<dbReference type="PANTHER" id="PTHR43423:SF1">
    <property type="entry name" value="ABC TRANSPORTER I FAMILY MEMBER 17"/>
    <property type="match status" value="1"/>
</dbReference>
<dbReference type="Pfam" id="PF00005">
    <property type="entry name" value="ABC_tran"/>
    <property type="match status" value="1"/>
</dbReference>
<dbReference type="SMART" id="SM00382">
    <property type="entry name" value="AAA"/>
    <property type="match status" value="1"/>
</dbReference>
<dbReference type="SUPFAM" id="SSF52540">
    <property type="entry name" value="P-loop containing nucleoside triphosphate hydrolases"/>
    <property type="match status" value="1"/>
</dbReference>
<dbReference type="PROSITE" id="PS00211">
    <property type="entry name" value="ABC_TRANSPORTER_1"/>
    <property type="match status" value="1"/>
</dbReference>
<dbReference type="PROSITE" id="PS50893">
    <property type="entry name" value="ABC_TRANSPORTER_2"/>
    <property type="match status" value="1"/>
</dbReference>
<dbReference type="PROSITE" id="PS51238">
    <property type="entry name" value="PSTB"/>
    <property type="match status" value="1"/>
</dbReference>
<sequence>MANSQVAEKEKLDAQTNNQDSVATIVTTENNKKNTIPDSEKKIVYSTQNLDLWYGENHALQNINLDILENNVTAIIGPSGCGKSTYIKALNRMVELVPSVKTAGKILYRDQNIFDAKYSKEKLRTNVGMVFQQPNPFPKSIYDNITYGPKTHGIKNKKILDEIVEKSLRGAAIWDELKDRLHTNAYGLSGGQQQRVCIARCLAIEPDVILMDEPTSALDPISTLRVEELVQELKENYSIIMVTHNMQQAARVSDKTAFFLNGYVNEYDDTDKIFSNPADKQTEDYISGRFG</sequence>
<gene>
    <name evidence="1" type="primary">pstB</name>
    <name type="ordered locus">SE_1067</name>
</gene>
<feature type="chain" id="PRO_0000092884" description="Phosphate import ATP-binding protein PstB">
    <location>
        <begin position="1"/>
        <end position="291"/>
    </location>
</feature>
<feature type="domain" description="ABC transporter" evidence="1">
    <location>
        <begin position="45"/>
        <end position="286"/>
    </location>
</feature>
<feature type="binding site" evidence="1">
    <location>
        <begin position="77"/>
        <end position="84"/>
    </location>
    <ligand>
        <name>ATP</name>
        <dbReference type="ChEBI" id="CHEBI:30616"/>
    </ligand>
</feature>
<name>PSTB_STAES</name>
<accession>Q8CPA1</accession>
<comment type="function">
    <text evidence="1">Part of the ABC transporter complex PstSACB involved in phosphate import. Responsible for energy coupling to the transport system.</text>
</comment>
<comment type="catalytic activity">
    <reaction evidence="1">
        <text>phosphate(out) + ATP + H2O = ADP + 2 phosphate(in) + H(+)</text>
        <dbReference type="Rhea" id="RHEA:24440"/>
        <dbReference type="ChEBI" id="CHEBI:15377"/>
        <dbReference type="ChEBI" id="CHEBI:15378"/>
        <dbReference type="ChEBI" id="CHEBI:30616"/>
        <dbReference type="ChEBI" id="CHEBI:43474"/>
        <dbReference type="ChEBI" id="CHEBI:456216"/>
        <dbReference type="EC" id="7.3.2.1"/>
    </reaction>
</comment>
<comment type="subunit">
    <text evidence="1">The complex is composed of two ATP-binding proteins (PstB), two transmembrane proteins (PstC and PstA) and a solute-binding protein (PstS).</text>
</comment>
<comment type="subcellular location">
    <subcellularLocation>
        <location evidence="1">Cell membrane</location>
        <topology evidence="1">Peripheral membrane protein</topology>
    </subcellularLocation>
</comment>
<comment type="similarity">
    <text evidence="1">Belongs to the ABC transporter superfamily. Phosphate importer (TC 3.A.1.7) family.</text>
</comment>
<evidence type="ECO:0000255" key="1">
    <source>
        <dbReference type="HAMAP-Rule" id="MF_01702"/>
    </source>
</evidence>
<organism>
    <name type="scientific">Staphylococcus epidermidis (strain ATCC 12228 / FDA PCI 1200)</name>
    <dbReference type="NCBI Taxonomy" id="176280"/>
    <lineage>
        <taxon>Bacteria</taxon>
        <taxon>Bacillati</taxon>
        <taxon>Bacillota</taxon>
        <taxon>Bacilli</taxon>
        <taxon>Bacillales</taxon>
        <taxon>Staphylococcaceae</taxon>
        <taxon>Staphylococcus</taxon>
    </lineage>
</organism>
<keyword id="KW-0067">ATP-binding</keyword>
<keyword id="KW-1003">Cell membrane</keyword>
<keyword id="KW-0472">Membrane</keyword>
<keyword id="KW-0547">Nucleotide-binding</keyword>
<keyword id="KW-0592">Phosphate transport</keyword>
<keyword id="KW-1278">Translocase</keyword>
<keyword id="KW-0813">Transport</keyword>
<proteinExistence type="inferred from homology"/>
<reference key="1">
    <citation type="journal article" date="2003" name="Mol. Microbiol.">
        <title>Genome-based analysis of virulence genes in a non-biofilm-forming Staphylococcus epidermidis strain (ATCC 12228).</title>
        <authorList>
            <person name="Zhang Y.-Q."/>
            <person name="Ren S.-X."/>
            <person name="Li H.-L."/>
            <person name="Wang Y.-X."/>
            <person name="Fu G."/>
            <person name="Yang J."/>
            <person name="Qin Z.-Q."/>
            <person name="Miao Y.-G."/>
            <person name="Wang W.-Y."/>
            <person name="Chen R.-S."/>
            <person name="Shen Y."/>
            <person name="Chen Z."/>
            <person name="Yuan Z.-H."/>
            <person name="Zhao G.-P."/>
            <person name="Qu D."/>
            <person name="Danchin A."/>
            <person name="Wen Y.-M."/>
        </authorList>
    </citation>
    <scope>NUCLEOTIDE SEQUENCE [LARGE SCALE GENOMIC DNA]</scope>
    <source>
        <strain>ATCC 12228 / FDA PCI 1200</strain>
    </source>
</reference>